<keyword id="KW-0067">ATP-binding</keyword>
<keyword id="KW-0418">Kinase</keyword>
<keyword id="KW-0547">Nucleotide-binding</keyword>
<keyword id="KW-1185">Reference proteome</keyword>
<keyword id="KW-0723">Serine/threonine-protein kinase</keyword>
<keyword id="KW-0808">Transferase</keyword>
<dbReference type="EC" id="2.7.11.1" evidence="1"/>
<dbReference type="EMBL" id="AE017333">
    <property type="protein sequence ID" value="AAU39515.1"/>
    <property type="molecule type" value="Genomic_DNA"/>
</dbReference>
<dbReference type="EMBL" id="CP000002">
    <property type="protein sequence ID" value="AAU22160.1"/>
    <property type="molecule type" value="Genomic_DNA"/>
</dbReference>
<dbReference type="RefSeq" id="WP_003179142.1">
    <property type="nucleotide sequence ID" value="NC_006322.1"/>
</dbReference>
<dbReference type="SMR" id="Q65N49"/>
<dbReference type="STRING" id="279010.BL02207"/>
<dbReference type="GeneID" id="92858481"/>
<dbReference type="KEGG" id="bld:BLi00559"/>
<dbReference type="KEGG" id="bli:BL02207"/>
<dbReference type="eggNOG" id="COG2172">
    <property type="taxonomic scope" value="Bacteria"/>
</dbReference>
<dbReference type="HOGENOM" id="CLU_090336_11_1_9"/>
<dbReference type="Proteomes" id="UP000000606">
    <property type="component" value="Chromosome"/>
</dbReference>
<dbReference type="GO" id="GO:0005524">
    <property type="term" value="F:ATP binding"/>
    <property type="evidence" value="ECO:0007669"/>
    <property type="project" value="UniProtKB-KW"/>
</dbReference>
<dbReference type="GO" id="GO:0106310">
    <property type="term" value="F:protein serine kinase activity"/>
    <property type="evidence" value="ECO:0007669"/>
    <property type="project" value="RHEA"/>
</dbReference>
<dbReference type="GO" id="GO:0004674">
    <property type="term" value="F:protein serine/threonine kinase activity"/>
    <property type="evidence" value="ECO:0007669"/>
    <property type="project" value="UniProtKB-KW"/>
</dbReference>
<dbReference type="GO" id="GO:0016989">
    <property type="term" value="F:sigma factor antagonist activity"/>
    <property type="evidence" value="ECO:0007669"/>
    <property type="project" value="InterPro"/>
</dbReference>
<dbReference type="CDD" id="cd16936">
    <property type="entry name" value="HATPase_RsbW-like"/>
    <property type="match status" value="1"/>
</dbReference>
<dbReference type="Gene3D" id="3.30.565.10">
    <property type="entry name" value="Histidine kinase-like ATPase, C-terminal domain"/>
    <property type="match status" value="1"/>
</dbReference>
<dbReference type="HAMAP" id="MF_00638">
    <property type="entry name" value="Anti_sigma_B"/>
    <property type="match status" value="1"/>
</dbReference>
<dbReference type="InterPro" id="IPR050267">
    <property type="entry name" value="Anti-sigma-factor_SerPK"/>
</dbReference>
<dbReference type="InterPro" id="IPR036890">
    <property type="entry name" value="HATPase_C_sf"/>
</dbReference>
<dbReference type="InterPro" id="IPR010193">
    <property type="entry name" value="RsbW"/>
</dbReference>
<dbReference type="NCBIfam" id="NF003144">
    <property type="entry name" value="PRK04069.1"/>
    <property type="match status" value="1"/>
</dbReference>
<dbReference type="NCBIfam" id="TIGR01924">
    <property type="entry name" value="rsbW_low_gc"/>
    <property type="match status" value="1"/>
</dbReference>
<dbReference type="PANTHER" id="PTHR35526">
    <property type="entry name" value="ANTI-SIGMA-F FACTOR RSBW-RELATED"/>
    <property type="match status" value="1"/>
</dbReference>
<dbReference type="PANTHER" id="PTHR35526:SF9">
    <property type="entry name" value="SERINE-PROTEIN KINASE RSBW"/>
    <property type="match status" value="1"/>
</dbReference>
<dbReference type="Pfam" id="PF13581">
    <property type="entry name" value="HATPase_c_2"/>
    <property type="match status" value="1"/>
</dbReference>
<dbReference type="SMART" id="SM00387">
    <property type="entry name" value="HATPase_c"/>
    <property type="match status" value="1"/>
</dbReference>
<dbReference type="SUPFAM" id="SSF55874">
    <property type="entry name" value="ATPase domain of HSP90 chaperone/DNA topoisomerase II/histidine kinase"/>
    <property type="match status" value="1"/>
</dbReference>
<accession>Q65N49</accession>
<accession>Q62YJ8</accession>
<name>RSBW_BACLD</name>
<sequence length="161" mass="17923">MKRAADYIEMKSPAKPEYVGIIRLTLSGIASKMGYSYDDIEDLKIAVSEACTNAVQHAYKADNNTGEVSVRFGVFEDRLEIVVADQGDSFDIQDKQKELGPYSPEHTVDQLSEGGLGLYLMETLMDEVHVQIDSGVTVSMTKFLNRERVDDGTTVQNYETN</sequence>
<organism>
    <name type="scientific">Bacillus licheniformis (strain ATCC 14580 / DSM 13 / JCM 2505 / CCUG 7422 / NBRC 12200 / NCIMB 9375 / NCTC 10341 / NRRL NRS-1264 / Gibson 46)</name>
    <dbReference type="NCBI Taxonomy" id="279010"/>
    <lineage>
        <taxon>Bacteria</taxon>
        <taxon>Bacillati</taxon>
        <taxon>Bacillota</taxon>
        <taxon>Bacilli</taxon>
        <taxon>Bacillales</taxon>
        <taxon>Bacillaceae</taxon>
        <taxon>Bacillus</taxon>
    </lineage>
</organism>
<protein>
    <recommendedName>
        <fullName evidence="1">Serine-protein kinase RsbW</fullName>
        <ecNumber evidence="1">2.7.11.1</ecNumber>
    </recommendedName>
    <alternativeName>
        <fullName evidence="1">Anti-sigma-B factor</fullName>
    </alternativeName>
    <alternativeName>
        <fullName evidence="1">Sigma-B negative effector RsbW</fullName>
    </alternativeName>
</protein>
<gene>
    <name evidence="1" type="primary">rsbW</name>
    <name type="ordered locus">BLi00559</name>
    <name type="ordered locus">BL02207</name>
</gene>
<proteinExistence type="inferred from homology"/>
<comment type="function">
    <text evidence="1">Negative regulator of sigma-B activity. Phosphorylates and inactivates its specific antagonist protein, RsbV. Upon phosphorylation of RsbV, RsbW is released and binds to sigma-B, thereby blocking its ability to form an RNA polymerase holoenzyme (E-sigma-B).</text>
</comment>
<comment type="catalytic activity">
    <reaction evidence="1">
        <text>L-seryl-[protein] + ATP = O-phospho-L-seryl-[protein] + ADP + H(+)</text>
        <dbReference type="Rhea" id="RHEA:17989"/>
        <dbReference type="Rhea" id="RHEA-COMP:9863"/>
        <dbReference type="Rhea" id="RHEA-COMP:11604"/>
        <dbReference type="ChEBI" id="CHEBI:15378"/>
        <dbReference type="ChEBI" id="CHEBI:29999"/>
        <dbReference type="ChEBI" id="CHEBI:30616"/>
        <dbReference type="ChEBI" id="CHEBI:83421"/>
        <dbReference type="ChEBI" id="CHEBI:456216"/>
        <dbReference type="EC" id="2.7.11.1"/>
    </reaction>
</comment>
<comment type="catalytic activity">
    <reaction evidence="1">
        <text>L-threonyl-[protein] + ATP = O-phospho-L-threonyl-[protein] + ADP + H(+)</text>
        <dbReference type="Rhea" id="RHEA:46608"/>
        <dbReference type="Rhea" id="RHEA-COMP:11060"/>
        <dbReference type="Rhea" id="RHEA-COMP:11605"/>
        <dbReference type="ChEBI" id="CHEBI:15378"/>
        <dbReference type="ChEBI" id="CHEBI:30013"/>
        <dbReference type="ChEBI" id="CHEBI:30616"/>
        <dbReference type="ChEBI" id="CHEBI:61977"/>
        <dbReference type="ChEBI" id="CHEBI:456216"/>
        <dbReference type="EC" id="2.7.11.1"/>
    </reaction>
</comment>
<comment type="similarity">
    <text evidence="1">Belongs to the anti-sigma-factor family.</text>
</comment>
<feature type="chain" id="PRO_0000203531" description="Serine-protein kinase RsbW">
    <location>
        <begin position="1"/>
        <end position="161"/>
    </location>
</feature>
<evidence type="ECO:0000255" key="1">
    <source>
        <dbReference type="HAMAP-Rule" id="MF_00638"/>
    </source>
</evidence>
<reference key="1">
    <citation type="journal article" date="2004" name="J. Mol. Microbiol. Biotechnol.">
        <title>The complete genome sequence of Bacillus licheniformis DSM13, an organism with great industrial potential.</title>
        <authorList>
            <person name="Veith B."/>
            <person name="Herzberg C."/>
            <person name="Steckel S."/>
            <person name="Feesche J."/>
            <person name="Maurer K.H."/>
            <person name="Ehrenreich P."/>
            <person name="Baeumer S."/>
            <person name="Henne A."/>
            <person name="Liesegang H."/>
            <person name="Merkl R."/>
            <person name="Ehrenreich A."/>
            <person name="Gottschalk G."/>
        </authorList>
    </citation>
    <scope>NUCLEOTIDE SEQUENCE [LARGE SCALE GENOMIC DNA]</scope>
    <source>
        <strain>ATCC 14580 / DSM 13 / JCM 2505 / CCUG 7422 / NBRC 12200 / NCIMB 9375 / NCTC 10341 / NRRL NRS-1264 / Gibson 46</strain>
    </source>
</reference>
<reference key="2">
    <citation type="journal article" date="2004" name="Genome Biol.">
        <title>Complete genome sequence of the industrial bacterium Bacillus licheniformis and comparisons with closely related Bacillus species.</title>
        <authorList>
            <person name="Rey M.W."/>
            <person name="Ramaiya P."/>
            <person name="Nelson B.A."/>
            <person name="Brody-Karpin S.D."/>
            <person name="Zaretsky E.J."/>
            <person name="Tang M."/>
            <person name="Lopez de Leon A."/>
            <person name="Xiang H."/>
            <person name="Gusti V."/>
            <person name="Clausen I.G."/>
            <person name="Olsen P.B."/>
            <person name="Rasmussen M.D."/>
            <person name="Andersen J.T."/>
            <person name="Joergensen P.L."/>
            <person name="Larsen T.S."/>
            <person name="Sorokin A."/>
            <person name="Bolotin A."/>
            <person name="Lapidus A."/>
            <person name="Galleron N."/>
            <person name="Ehrlich S.D."/>
            <person name="Berka R.M."/>
        </authorList>
    </citation>
    <scope>NUCLEOTIDE SEQUENCE [LARGE SCALE GENOMIC DNA]</scope>
    <source>
        <strain>ATCC 14580 / DSM 13 / JCM 2505 / CCUG 7422 / NBRC 12200 / NCIMB 9375 / NCTC 10341 / NRRL NRS-1264 / Gibson 46</strain>
    </source>
</reference>